<comment type="function">
    <text evidence="1">The natural substrate for this enzyme may be peptidyl-tRNAs which drop off the ribosome during protein synthesis.</text>
</comment>
<comment type="catalytic activity">
    <reaction>
        <text>an N-acyl-L-alpha-aminoacyl-tRNA + H2O = an N-acyl-L-amino acid + a tRNA + H(+)</text>
        <dbReference type="Rhea" id="RHEA:54448"/>
        <dbReference type="Rhea" id="RHEA-COMP:10123"/>
        <dbReference type="Rhea" id="RHEA-COMP:13883"/>
        <dbReference type="ChEBI" id="CHEBI:15377"/>
        <dbReference type="ChEBI" id="CHEBI:15378"/>
        <dbReference type="ChEBI" id="CHEBI:59874"/>
        <dbReference type="ChEBI" id="CHEBI:78442"/>
        <dbReference type="ChEBI" id="CHEBI:138191"/>
        <dbReference type="EC" id="3.1.1.29"/>
    </reaction>
</comment>
<comment type="subcellular location">
    <subcellularLocation>
        <location evidence="1">Cytoplasm</location>
    </subcellularLocation>
</comment>
<comment type="similarity">
    <text evidence="2">Belongs to the PTH2 family.</text>
</comment>
<reference key="1">
    <citation type="journal article" date="2003" name="Proc. Natl. Acad. Sci. U.S.A.">
        <title>The genome of Nanoarchaeum equitans: insights into early archaeal evolution and derived parasitism.</title>
        <authorList>
            <person name="Waters E."/>
            <person name="Hohn M.J."/>
            <person name="Ahel I."/>
            <person name="Graham D.E."/>
            <person name="Adams M.D."/>
            <person name="Barnstead M."/>
            <person name="Beeson K.Y."/>
            <person name="Bibbs L."/>
            <person name="Bolanos R."/>
            <person name="Keller M."/>
            <person name="Kretz K."/>
            <person name="Lin X."/>
            <person name="Mathur E."/>
            <person name="Ni J."/>
            <person name="Podar M."/>
            <person name="Richardson T."/>
            <person name="Sutton G.G."/>
            <person name="Simon M."/>
            <person name="Soell D."/>
            <person name="Stetter K.O."/>
            <person name="Short J.M."/>
            <person name="Noorderwier M."/>
        </authorList>
    </citation>
    <scope>NUCLEOTIDE SEQUENCE [LARGE SCALE GENOMIC DNA]</scope>
    <source>
        <strain>Kin4-M</strain>
    </source>
</reference>
<keyword id="KW-0963">Cytoplasm</keyword>
<keyword id="KW-0378">Hydrolase</keyword>
<keyword id="KW-1185">Reference proteome</keyword>
<accession>P61235</accession>
<proteinExistence type="inferred from homology"/>
<sequence>MVKQVIVCRKLDIGKGKLCAQVAHASLDAALKVYRNNKELFDRWYREGAKKVVLKVNSLEELLDIAKKAMEKGIVVSIIRDAGKTQVSPGTIICIALGPDEDEKIDQITGNLKLY</sequence>
<evidence type="ECO:0000250" key="1"/>
<evidence type="ECO:0000305" key="2"/>
<protein>
    <recommendedName>
        <fullName>Peptidyl-tRNA hydrolase</fullName>
        <shortName>PTH</shortName>
        <ecNumber>3.1.1.29</ecNumber>
    </recommendedName>
</protein>
<name>PTH_NANEQ</name>
<feature type="chain" id="PRO_0000120297" description="Peptidyl-tRNA hydrolase">
    <location>
        <begin position="1"/>
        <end position="115"/>
    </location>
</feature>
<organism>
    <name type="scientific">Nanoarchaeum equitans (strain Kin4-M)</name>
    <dbReference type="NCBI Taxonomy" id="228908"/>
    <lineage>
        <taxon>Archaea</taxon>
        <taxon>Nanobdellota</taxon>
        <taxon>Candidatus Nanoarchaeia</taxon>
        <taxon>Nanoarchaeales</taxon>
        <taxon>Nanoarchaeaceae</taxon>
        <taxon>Nanoarchaeum</taxon>
    </lineage>
</organism>
<dbReference type="EC" id="3.1.1.29"/>
<dbReference type="EMBL" id="AE017199">
    <property type="protein sequence ID" value="AAR39098.1"/>
    <property type="molecule type" value="Genomic_DNA"/>
</dbReference>
<dbReference type="SMR" id="P61235"/>
<dbReference type="STRING" id="228908.NEQ244"/>
<dbReference type="EnsemblBacteria" id="AAR39098">
    <property type="protein sequence ID" value="AAR39098"/>
    <property type="gene ID" value="NEQ244"/>
</dbReference>
<dbReference type="KEGG" id="neq:NEQ244"/>
<dbReference type="PATRIC" id="fig|228908.8.peg.250"/>
<dbReference type="HOGENOM" id="CLU_073661_2_2_2"/>
<dbReference type="Proteomes" id="UP000000578">
    <property type="component" value="Chromosome"/>
</dbReference>
<dbReference type="GO" id="GO:0005829">
    <property type="term" value="C:cytosol"/>
    <property type="evidence" value="ECO:0007669"/>
    <property type="project" value="TreeGrafter"/>
</dbReference>
<dbReference type="GO" id="GO:0004045">
    <property type="term" value="F:peptidyl-tRNA hydrolase activity"/>
    <property type="evidence" value="ECO:0007669"/>
    <property type="project" value="UniProtKB-UniRule"/>
</dbReference>
<dbReference type="GO" id="GO:0006412">
    <property type="term" value="P:translation"/>
    <property type="evidence" value="ECO:0007669"/>
    <property type="project" value="UniProtKB-UniRule"/>
</dbReference>
<dbReference type="CDD" id="cd02430">
    <property type="entry name" value="PTH2"/>
    <property type="match status" value="1"/>
</dbReference>
<dbReference type="FunFam" id="3.40.1490.10:FF:000001">
    <property type="entry name" value="Peptidyl-tRNA hydrolase 2"/>
    <property type="match status" value="1"/>
</dbReference>
<dbReference type="Gene3D" id="3.40.1490.10">
    <property type="entry name" value="Bit1"/>
    <property type="match status" value="1"/>
</dbReference>
<dbReference type="HAMAP" id="MF_00628">
    <property type="entry name" value="Pept_tRNA_hydro_arch"/>
    <property type="match status" value="1"/>
</dbReference>
<dbReference type="InterPro" id="IPR023476">
    <property type="entry name" value="Pep_tRNA_hydro_II_dom_sf"/>
</dbReference>
<dbReference type="InterPro" id="IPR034759">
    <property type="entry name" value="Pept_tRNA_hydro_arch"/>
</dbReference>
<dbReference type="InterPro" id="IPR002833">
    <property type="entry name" value="PTH2"/>
</dbReference>
<dbReference type="NCBIfam" id="TIGR00283">
    <property type="entry name" value="arch_pth2"/>
    <property type="match status" value="1"/>
</dbReference>
<dbReference type="NCBIfam" id="NF003314">
    <property type="entry name" value="PRK04322.1"/>
    <property type="match status" value="1"/>
</dbReference>
<dbReference type="PANTHER" id="PTHR12649">
    <property type="entry name" value="PEPTIDYL-TRNA HYDROLASE 2"/>
    <property type="match status" value="1"/>
</dbReference>
<dbReference type="PANTHER" id="PTHR12649:SF11">
    <property type="entry name" value="PEPTIDYL-TRNA HYDROLASE 2, MITOCHONDRIAL"/>
    <property type="match status" value="1"/>
</dbReference>
<dbReference type="Pfam" id="PF01981">
    <property type="entry name" value="PTH2"/>
    <property type="match status" value="1"/>
</dbReference>
<dbReference type="SUPFAM" id="SSF102462">
    <property type="entry name" value="Peptidyl-tRNA hydrolase II"/>
    <property type="match status" value="1"/>
</dbReference>
<gene>
    <name type="primary">pth</name>
    <name type="ordered locus">NEQ244</name>
</gene>